<comment type="function">
    <text evidence="1">Catalyzes a reversible aldol reaction between acetaldehyde and D-glyceraldehyde 3-phosphate to generate 2-deoxy-D-ribose 5-phosphate.</text>
</comment>
<comment type="catalytic activity">
    <reaction evidence="1">
        <text>2-deoxy-D-ribose 5-phosphate = D-glyceraldehyde 3-phosphate + acetaldehyde</text>
        <dbReference type="Rhea" id="RHEA:12821"/>
        <dbReference type="ChEBI" id="CHEBI:15343"/>
        <dbReference type="ChEBI" id="CHEBI:59776"/>
        <dbReference type="ChEBI" id="CHEBI:62877"/>
        <dbReference type="EC" id="4.1.2.4"/>
    </reaction>
</comment>
<comment type="pathway">
    <text evidence="1">Carbohydrate degradation; 2-deoxy-D-ribose 1-phosphate degradation; D-glyceraldehyde 3-phosphate and acetaldehyde from 2-deoxy-alpha-D-ribose 1-phosphate: step 2/2.</text>
</comment>
<comment type="subcellular location">
    <subcellularLocation>
        <location evidence="1">Cytoplasm</location>
    </subcellularLocation>
</comment>
<comment type="similarity">
    <text evidence="1">Belongs to the DeoC/FbaB aldolase family. DeoC type 2 subfamily.</text>
</comment>
<sequence length="258" mass="27745">MSDLKAAALRALKLMDLTTLNDDDTDAKVISLCHDAKTAVGNTAAICIYPRFIPIAKKTLREQGTPEVRIATVTNFPHGNDDIDIAVAETKAAVAYGADEVDVVFPYRALMAGDEKVGFELVKQCKEACGDILLKVIIETGELKEEALIKKASQICIEAGADFIKTSTGKVPVNATPEYARMMLEVIRDMGVAETVGFKPAGGVRTAEDAAAYLAMADEILGDNWVDARHYRFGASSLLTNLLNTLEVSDDVADPTAY</sequence>
<keyword id="KW-0963">Cytoplasm</keyword>
<keyword id="KW-0456">Lyase</keyword>
<keyword id="KW-0704">Schiff base</keyword>
<name>DEOC_VIBPA</name>
<feature type="chain" id="PRO_0000057306" description="Deoxyribose-phosphate aldolase">
    <location>
        <begin position="1"/>
        <end position="258"/>
    </location>
</feature>
<feature type="active site" description="Proton donor/acceptor" evidence="1">
    <location>
        <position position="102"/>
    </location>
</feature>
<feature type="active site" description="Schiff-base intermediate with acetaldehyde" evidence="1">
    <location>
        <position position="165"/>
    </location>
</feature>
<feature type="active site" description="Proton donor/acceptor" evidence="1">
    <location>
        <position position="199"/>
    </location>
</feature>
<dbReference type="EC" id="4.1.2.4" evidence="1"/>
<dbReference type="EMBL" id="BA000031">
    <property type="protein sequence ID" value="BAC60699.1"/>
    <property type="molecule type" value="Genomic_DNA"/>
</dbReference>
<dbReference type="RefSeq" id="NP_798815.1">
    <property type="nucleotide sequence ID" value="NC_004603.1"/>
</dbReference>
<dbReference type="RefSeq" id="WP_005456105.1">
    <property type="nucleotide sequence ID" value="NC_004603.1"/>
</dbReference>
<dbReference type="SMR" id="Q87M22"/>
<dbReference type="GeneID" id="1189949"/>
<dbReference type="KEGG" id="vpa:VP2436"/>
<dbReference type="PATRIC" id="fig|223926.6.peg.2337"/>
<dbReference type="eggNOG" id="COG0274">
    <property type="taxonomic scope" value="Bacteria"/>
</dbReference>
<dbReference type="HOGENOM" id="CLU_053595_3_1_6"/>
<dbReference type="UniPathway" id="UPA00002">
    <property type="reaction ID" value="UER00468"/>
</dbReference>
<dbReference type="Proteomes" id="UP000002493">
    <property type="component" value="Chromosome 1"/>
</dbReference>
<dbReference type="GO" id="GO:0005737">
    <property type="term" value="C:cytoplasm"/>
    <property type="evidence" value="ECO:0007669"/>
    <property type="project" value="UniProtKB-SubCell"/>
</dbReference>
<dbReference type="GO" id="GO:0004139">
    <property type="term" value="F:deoxyribose-phosphate aldolase activity"/>
    <property type="evidence" value="ECO:0007669"/>
    <property type="project" value="UniProtKB-UniRule"/>
</dbReference>
<dbReference type="GO" id="GO:0006018">
    <property type="term" value="P:2-deoxyribose 1-phosphate catabolic process"/>
    <property type="evidence" value="ECO:0007669"/>
    <property type="project" value="UniProtKB-UniRule"/>
</dbReference>
<dbReference type="GO" id="GO:0016052">
    <property type="term" value="P:carbohydrate catabolic process"/>
    <property type="evidence" value="ECO:0007669"/>
    <property type="project" value="TreeGrafter"/>
</dbReference>
<dbReference type="GO" id="GO:0009264">
    <property type="term" value="P:deoxyribonucleotide catabolic process"/>
    <property type="evidence" value="ECO:0007669"/>
    <property type="project" value="InterPro"/>
</dbReference>
<dbReference type="CDD" id="cd00959">
    <property type="entry name" value="DeoC"/>
    <property type="match status" value="1"/>
</dbReference>
<dbReference type="FunFam" id="3.20.20.70:FF:000034">
    <property type="entry name" value="Deoxyribose-phosphate aldolase"/>
    <property type="match status" value="1"/>
</dbReference>
<dbReference type="Gene3D" id="3.20.20.70">
    <property type="entry name" value="Aldolase class I"/>
    <property type="match status" value="1"/>
</dbReference>
<dbReference type="HAMAP" id="MF_00592">
    <property type="entry name" value="DeoC_type2"/>
    <property type="match status" value="1"/>
</dbReference>
<dbReference type="InterPro" id="IPR013785">
    <property type="entry name" value="Aldolase_TIM"/>
</dbReference>
<dbReference type="InterPro" id="IPR011343">
    <property type="entry name" value="DeoC"/>
</dbReference>
<dbReference type="InterPro" id="IPR002915">
    <property type="entry name" value="DeoC/FbaB/LacD_aldolase"/>
</dbReference>
<dbReference type="InterPro" id="IPR023649">
    <property type="entry name" value="DeoC_typeII"/>
</dbReference>
<dbReference type="NCBIfam" id="TIGR00126">
    <property type="entry name" value="deoC"/>
    <property type="match status" value="1"/>
</dbReference>
<dbReference type="PANTHER" id="PTHR10889">
    <property type="entry name" value="DEOXYRIBOSE-PHOSPHATE ALDOLASE"/>
    <property type="match status" value="1"/>
</dbReference>
<dbReference type="PANTHER" id="PTHR10889:SF3">
    <property type="entry name" value="DEOXYRIBOSE-PHOSPHATE ALDOLASE"/>
    <property type="match status" value="1"/>
</dbReference>
<dbReference type="Pfam" id="PF01791">
    <property type="entry name" value="DeoC"/>
    <property type="match status" value="1"/>
</dbReference>
<dbReference type="PIRSF" id="PIRSF001357">
    <property type="entry name" value="DeoC"/>
    <property type="match status" value="1"/>
</dbReference>
<dbReference type="SMART" id="SM01133">
    <property type="entry name" value="DeoC"/>
    <property type="match status" value="1"/>
</dbReference>
<dbReference type="SUPFAM" id="SSF51569">
    <property type="entry name" value="Aldolase"/>
    <property type="match status" value="1"/>
</dbReference>
<evidence type="ECO:0000255" key="1">
    <source>
        <dbReference type="HAMAP-Rule" id="MF_00592"/>
    </source>
</evidence>
<accession>Q87M22</accession>
<reference key="1">
    <citation type="journal article" date="2003" name="Lancet">
        <title>Genome sequence of Vibrio parahaemolyticus: a pathogenic mechanism distinct from that of V. cholerae.</title>
        <authorList>
            <person name="Makino K."/>
            <person name="Oshima K."/>
            <person name="Kurokawa K."/>
            <person name="Yokoyama K."/>
            <person name="Uda T."/>
            <person name="Tagomori K."/>
            <person name="Iijima Y."/>
            <person name="Najima M."/>
            <person name="Nakano M."/>
            <person name="Yamashita A."/>
            <person name="Kubota Y."/>
            <person name="Kimura S."/>
            <person name="Yasunaga T."/>
            <person name="Honda T."/>
            <person name="Shinagawa H."/>
            <person name="Hattori M."/>
            <person name="Iida T."/>
        </authorList>
    </citation>
    <scope>NUCLEOTIDE SEQUENCE [LARGE SCALE GENOMIC DNA]</scope>
    <source>
        <strain>RIMD 2210633</strain>
    </source>
</reference>
<proteinExistence type="inferred from homology"/>
<gene>
    <name evidence="1" type="primary">deoC</name>
    <name type="ordered locus">VP2436</name>
</gene>
<organism>
    <name type="scientific">Vibrio parahaemolyticus serotype O3:K6 (strain RIMD 2210633)</name>
    <dbReference type="NCBI Taxonomy" id="223926"/>
    <lineage>
        <taxon>Bacteria</taxon>
        <taxon>Pseudomonadati</taxon>
        <taxon>Pseudomonadota</taxon>
        <taxon>Gammaproteobacteria</taxon>
        <taxon>Vibrionales</taxon>
        <taxon>Vibrionaceae</taxon>
        <taxon>Vibrio</taxon>
    </lineage>
</organism>
<protein>
    <recommendedName>
        <fullName evidence="1">Deoxyribose-phosphate aldolase</fullName>
        <shortName evidence="1">DERA</shortName>
        <ecNumber evidence="1">4.1.2.4</ecNumber>
    </recommendedName>
    <alternativeName>
        <fullName evidence="1">2-deoxy-D-ribose 5-phosphate aldolase</fullName>
    </alternativeName>
    <alternativeName>
        <fullName evidence="1">Phosphodeoxyriboaldolase</fullName>
        <shortName evidence="1">Deoxyriboaldolase</shortName>
    </alternativeName>
</protein>